<accession>P58552</accession>
<name>RECA_NOSS1</name>
<keyword id="KW-0067">ATP-binding</keyword>
<keyword id="KW-0963">Cytoplasm</keyword>
<keyword id="KW-0227">DNA damage</keyword>
<keyword id="KW-0233">DNA recombination</keyword>
<keyword id="KW-0234">DNA repair</keyword>
<keyword id="KW-0238">DNA-binding</keyword>
<keyword id="KW-0547">Nucleotide-binding</keyword>
<keyword id="KW-1185">Reference proteome</keyword>
<keyword id="KW-0742">SOS response</keyword>
<sequence>MAINTDTSGKQKALTMVLNQIERSFGKGAIMRLGDATRMRVETISTGALTLDLALGGGLPKGRVIEIYGPESSGKTTVALHAIAEVQKEGGIAAFVDAEHALDPTYASALGVDIQNLLVSQPDTGESALEIVDQLVRSAAVDIVVIDSVAALVPRAEIEGDMGDAHVGLQARLMSQALRKITGNIGKSGCTVIFINQLRQKIGVTYGSPETTTGGNALKFYASVRLDIRRIQTLKKGTDEFGNRVKVKVAKNKVAPPFRIAEFDIIFGKGVSTLGCLVDLAEETGILIRKGAWYSYNGDNISQGRDNAIKYLEEKPEFSEQIKQQVREKLDKGAVVSANSVAKNNEDDEDEDVEEEE</sequence>
<evidence type="ECO:0000255" key="1">
    <source>
        <dbReference type="HAMAP-Rule" id="MF_00268"/>
    </source>
</evidence>
<evidence type="ECO:0000256" key="2">
    <source>
        <dbReference type="SAM" id="MobiDB-lite"/>
    </source>
</evidence>
<dbReference type="EMBL" id="BA000019">
    <property type="protein sequence ID" value="BAB74971.1"/>
    <property type="molecule type" value="Genomic_DNA"/>
</dbReference>
<dbReference type="PIR" id="AI2214">
    <property type="entry name" value="AI2214"/>
</dbReference>
<dbReference type="RefSeq" id="WP_010997423.1">
    <property type="nucleotide sequence ID" value="NZ_RSCN01000001.1"/>
</dbReference>
<dbReference type="SMR" id="P58552"/>
<dbReference type="STRING" id="103690.gene:10495310"/>
<dbReference type="KEGG" id="ana:all3272"/>
<dbReference type="eggNOG" id="COG0468">
    <property type="taxonomic scope" value="Bacteria"/>
</dbReference>
<dbReference type="OrthoDB" id="9776733at2"/>
<dbReference type="Proteomes" id="UP000002483">
    <property type="component" value="Chromosome"/>
</dbReference>
<dbReference type="GO" id="GO:0005829">
    <property type="term" value="C:cytosol"/>
    <property type="evidence" value="ECO:0007669"/>
    <property type="project" value="TreeGrafter"/>
</dbReference>
<dbReference type="GO" id="GO:0005524">
    <property type="term" value="F:ATP binding"/>
    <property type="evidence" value="ECO:0007669"/>
    <property type="project" value="UniProtKB-UniRule"/>
</dbReference>
<dbReference type="GO" id="GO:0016887">
    <property type="term" value="F:ATP hydrolysis activity"/>
    <property type="evidence" value="ECO:0007669"/>
    <property type="project" value="InterPro"/>
</dbReference>
<dbReference type="GO" id="GO:0140664">
    <property type="term" value="F:ATP-dependent DNA damage sensor activity"/>
    <property type="evidence" value="ECO:0007669"/>
    <property type="project" value="InterPro"/>
</dbReference>
<dbReference type="GO" id="GO:0003684">
    <property type="term" value="F:damaged DNA binding"/>
    <property type="evidence" value="ECO:0007669"/>
    <property type="project" value="UniProtKB-UniRule"/>
</dbReference>
<dbReference type="GO" id="GO:0003697">
    <property type="term" value="F:single-stranded DNA binding"/>
    <property type="evidence" value="ECO:0007669"/>
    <property type="project" value="UniProtKB-UniRule"/>
</dbReference>
<dbReference type="GO" id="GO:0006310">
    <property type="term" value="P:DNA recombination"/>
    <property type="evidence" value="ECO:0007669"/>
    <property type="project" value="UniProtKB-UniRule"/>
</dbReference>
<dbReference type="GO" id="GO:0006281">
    <property type="term" value="P:DNA repair"/>
    <property type="evidence" value="ECO:0007669"/>
    <property type="project" value="UniProtKB-UniRule"/>
</dbReference>
<dbReference type="GO" id="GO:0009432">
    <property type="term" value="P:SOS response"/>
    <property type="evidence" value="ECO:0007669"/>
    <property type="project" value="UniProtKB-UniRule"/>
</dbReference>
<dbReference type="CDD" id="cd00983">
    <property type="entry name" value="RecA"/>
    <property type="match status" value="1"/>
</dbReference>
<dbReference type="FunFam" id="3.40.50.300:FF:000087">
    <property type="entry name" value="Recombinase RecA"/>
    <property type="match status" value="1"/>
</dbReference>
<dbReference type="Gene3D" id="3.40.50.300">
    <property type="entry name" value="P-loop containing nucleotide triphosphate hydrolases"/>
    <property type="match status" value="1"/>
</dbReference>
<dbReference type="HAMAP" id="MF_00268">
    <property type="entry name" value="RecA"/>
    <property type="match status" value="1"/>
</dbReference>
<dbReference type="InterPro" id="IPR003593">
    <property type="entry name" value="AAA+_ATPase"/>
</dbReference>
<dbReference type="InterPro" id="IPR013765">
    <property type="entry name" value="DNA_recomb/repair_RecA"/>
</dbReference>
<dbReference type="InterPro" id="IPR020584">
    <property type="entry name" value="DNA_recomb/repair_RecA_CS"/>
</dbReference>
<dbReference type="InterPro" id="IPR027417">
    <property type="entry name" value="P-loop_NTPase"/>
</dbReference>
<dbReference type="InterPro" id="IPR049261">
    <property type="entry name" value="RecA-like_C"/>
</dbReference>
<dbReference type="InterPro" id="IPR049428">
    <property type="entry name" value="RecA-like_N"/>
</dbReference>
<dbReference type="InterPro" id="IPR020588">
    <property type="entry name" value="RecA_ATP-bd"/>
</dbReference>
<dbReference type="InterPro" id="IPR023400">
    <property type="entry name" value="RecA_C_sf"/>
</dbReference>
<dbReference type="InterPro" id="IPR020587">
    <property type="entry name" value="RecA_monomer-monomer_interface"/>
</dbReference>
<dbReference type="NCBIfam" id="TIGR02012">
    <property type="entry name" value="tigrfam_recA"/>
    <property type="match status" value="1"/>
</dbReference>
<dbReference type="PANTHER" id="PTHR45900:SF1">
    <property type="entry name" value="MITOCHONDRIAL DNA REPAIR PROTEIN RECA HOMOLOG-RELATED"/>
    <property type="match status" value="1"/>
</dbReference>
<dbReference type="PANTHER" id="PTHR45900">
    <property type="entry name" value="RECA"/>
    <property type="match status" value="1"/>
</dbReference>
<dbReference type="Pfam" id="PF00154">
    <property type="entry name" value="RecA"/>
    <property type="match status" value="1"/>
</dbReference>
<dbReference type="Pfam" id="PF21096">
    <property type="entry name" value="RecA_C"/>
    <property type="match status" value="1"/>
</dbReference>
<dbReference type="PRINTS" id="PR00142">
    <property type="entry name" value="RECA"/>
</dbReference>
<dbReference type="SMART" id="SM00382">
    <property type="entry name" value="AAA"/>
    <property type="match status" value="1"/>
</dbReference>
<dbReference type="SUPFAM" id="SSF52540">
    <property type="entry name" value="P-loop containing nucleoside triphosphate hydrolases"/>
    <property type="match status" value="1"/>
</dbReference>
<dbReference type="SUPFAM" id="SSF54752">
    <property type="entry name" value="RecA protein, C-terminal domain"/>
    <property type="match status" value="1"/>
</dbReference>
<dbReference type="PROSITE" id="PS00321">
    <property type="entry name" value="RECA_1"/>
    <property type="match status" value="1"/>
</dbReference>
<dbReference type="PROSITE" id="PS50162">
    <property type="entry name" value="RECA_2"/>
    <property type="match status" value="1"/>
</dbReference>
<dbReference type="PROSITE" id="PS50163">
    <property type="entry name" value="RECA_3"/>
    <property type="match status" value="1"/>
</dbReference>
<comment type="function">
    <text evidence="1">Can catalyze the hydrolysis of ATP in the presence of single-stranded DNA, the ATP-dependent uptake of single-stranded DNA by duplex DNA, and the ATP-dependent hybridization of homologous single-stranded DNAs. It interacts with LexA causing its activation and leading to its autocatalytic cleavage.</text>
</comment>
<comment type="subcellular location">
    <subcellularLocation>
        <location evidence="1">Cytoplasm</location>
    </subcellularLocation>
</comment>
<comment type="similarity">
    <text evidence="1">Belongs to the RecA family.</text>
</comment>
<proteinExistence type="inferred from homology"/>
<organism>
    <name type="scientific">Nostoc sp. (strain PCC 7120 / SAG 25.82 / UTEX 2576)</name>
    <dbReference type="NCBI Taxonomy" id="103690"/>
    <lineage>
        <taxon>Bacteria</taxon>
        <taxon>Bacillati</taxon>
        <taxon>Cyanobacteriota</taxon>
        <taxon>Cyanophyceae</taxon>
        <taxon>Nostocales</taxon>
        <taxon>Nostocaceae</taxon>
        <taxon>Nostoc</taxon>
    </lineage>
</organism>
<feature type="chain" id="PRO_0000122640" description="Protein RecA">
    <location>
        <begin position="1"/>
        <end position="357"/>
    </location>
</feature>
<feature type="region of interest" description="Disordered" evidence="2">
    <location>
        <begin position="337"/>
        <end position="357"/>
    </location>
</feature>
<feature type="compositionally biased region" description="Acidic residues" evidence="2">
    <location>
        <begin position="346"/>
        <end position="357"/>
    </location>
</feature>
<feature type="binding site" evidence="1">
    <location>
        <begin position="69"/>
        <end position="76"/>
    </location>
    <ligand>
        <name>ATP</name>
        <dbReference type="ChEBI" id="CHEBI:30616"/>
    </ligand>
</feature>
<protein>
    <recommendedName>
        <fullName evidence="1">Protein RecA</fullName>
    </recommendedName>
    <alternativeName>
        <fullName evidence="1">Recombinase A</fullName>
    </alternativeName>
</protein>
<reference key="1">
    <citation type="journal article" date="2001" name="DNA Res.">
        <title>Complete genomic sequence of the filamentous nitrogen-fixing cyanobacterium Anabaena sp. strain PCC 7120.</title>
        <authorList>
            <person name="Kaneko T."/>
            <person name="Nakamura Y."/>
            <person name="Wolk C.P."/>
            <person name="Kuritz T."/>
            <person name="Sasamoto S."/>
            <person name="Watanabe A."/>
            <person name="Iriguchi M."/>
            <person name="Ishikawa A."/>
            <person name="Kawashima K."/>
            <person name="Kimura T."/>
            <person name="Kishida Y."/>
            <person name="Kohara M."/>
            <person name="Matsumoto M."/>
            <person name="Matsuno A."/>
            <person name="Muraki A."/>
            <person name="Nakazaki N."/>
            <person name="Shimpo S."/>
            <person name="Sugimoto M."/>
            <person name="Takazawa M."/>
            <person name="Yamada M."/>
            <person name="Yasuda M."/>
            <person name="Tabata S."/>
        </authorList>
    </citation>
    <scope>NUCLEOTIDE SEQUENCE [LARGE SCALE GENOMIC DNA]</scope>
    <source>
        <strain>PCC 7120 / SAG 25.82 / UTEX 2576</strain>
    </source>
</reference>
<gene>
    <name evidence="1" type="primary">recA</name>
    <name type="ordered locus">all3272</name>
</gene>